<dbReference type="EMBL" id="AP008934">
    <property type="protein sequence ID" value="BAE17821.1"/>
    <property type="molecule type" value="Genomic_DNA"/>
</dbReference>
<dbReference type="RefSeq" id="WP_002482625.1">
    <property type="nucleotide sequence ID" value="NZ_MTGA01000036.1"/>
</dbReference>
<dbReference type="SMR" id="Q49ZF5"/>
<dbReference type="KEGG" id="ssp:SSP0676"/>
<dbReference type="eggNOG" id="COG0199">
    <property type="taxonomic scope" value="Bacteria"/>
</dbReference>
<dbReference type="HOGENOM" id="CLU_139869_3_0_9"/>
<dbReference type="OrthoDB" id="9810484at2"/>
<dbReference type="Proteomes" id="UP000006371">
    <property type="component" value="Chromosome"/>
</dbReference>
<dbReference type="GO" id="GO:0015935">
    <property type="term" value="C:small ribosomal subunit"/>
    <property type="evidence" value="ECO:0007669"/>
    <property type="project" value="TreeGrafter"/>
</dbReference>
<dbReference type="GO" id="GO:0019843">
    <property type="term" value="F:rRNA binding"/>
    <property type="evidence" value="ECO:0007669"/>
    <property type="project" value="UniProtKB-UniRule"/>
</dbReference>
<dbReference type="GO" id="GO:0003735">
    <property type="term" value="F:structural constituent of ribosome"/>
    <property type="evidence" value="ECO:0007669"/>
    <property type="project" value="InterPro"/>
</dbReference>
<dbReference type="GO" id="GO:0008270">
    <property type="term" value="F:zinc ion binding"/>
    <property type="evidence" value="ECO:0007669"/>
    <property type="project" value="UniProtKB-UniRule"/>
</dbReference>
<dbReference type="GO" id="GO:0006412">
    <property type="term" value="P:translation"/>
    <property type="evidence" value="ECO:0007669"/>
    <property type="project" value="UniProtKB-UniRule"/>
</dbReference>
<dbReference type="FunFam" id="4.10.830.10:FF:000001">
    <property type="entry name" value="30S ribosomal protein S14 type Z"/>
    <property type="match status" value="1"/>
</dbReference>
<dbReference type="Gene3D" id="4.10.830.10">
    <property type="entry name" value="30s Ribosomal Protein S14, Chain N"/>
    <property type="match status" value="1"/>
</dbReference>
<dbReference type="HAMAP" id="MF_01364_B">
    <property type="entry name" value="Ribosomal_uS14_2_B"/>
    <property type="match status" value="1"/>
</dbReference>
<dbReference type="InterPro" id="IPR001209">
    <property type="entry name" value="Ribosomal_uS14"/>
</dbReference>
<dbReference type="InterPro" id="IPR023053">
    <property type="entry name" value="Ribosomal_uS14_bact"/>
</dbReference>
<dbReference type="InterPro" id="IPR018271">
    <property type="entry name" value="Ribosomal_uS14_CS"/>
</dbReference>
<dbReference type="InterPro" id="IPR043140">
    <property type="entry name" value="Ribosomal_uS14_sf"/>
</dbReference>
<dbReference type="NCBIfam" id="NF005974">
    <property type="entry name" value="PRK08061.1"/>
    <property type="match status" value="1"/>
</dbReference>
<dbReference type="PANTHER" id="PTHR19836">
    <property type="entry name" value="30S RIBOSOMAL PROTEIN S14"/>
    <property type="match status" value="1"/>
</dbReference>
<dbReference type="PANTHER" id="PTHR19836:SF26">
    <property type="entry name" value="SMALL RIBOSOMAL SUBUNIT PROTEIN US14B"/>
    <property type="match status" value="1"/>
</dbReference>
<dbReference type="Pfam" id="PF00253">
    <property type="entry name" value="Ribosomal_S14"/>
    <property type="match status" value="1"/>
</dbReference>
<dbReference type="SUPFAM" id="SSF57716">
    <property type="entry name" value="Glucocorticoid receptor-like (DNA-binding domain)"/>
    <property type="match status" value="1"/>
</dbReference>
<dbReference type="PROSITE" id="PS00527">
    <property type="entry name" value="RIBOSOMAL_S14"/>
    <property type="match status" value="1"/>
</dbReference>
<accession>Q49ZF5</accession>
<evidence type="ECO:0000255" key="1">
    <source>
        <dbReference type="HAMAP-Rule" id="MF_01364"/>
    </source>
</evidence>
<evidence type="ECO:0000305" key="2"/>
<protein>
    <recommendedName>
        <fullName evidence="1">Small ribosomal subunit protein uS14B</fullName>
    </recommendedName>
    <alternativeName>
        <fullName evidence="2">30S ribosomal protein S14 type Z</fullName>
    </alternativeName>
</protein>
<reference key="1">
    <citation type="journal article" date="2005" name="Proc. Natl. Acad. Sci. U.S.A.">
        <title>Whole genome sequence of Staphylococcus saprophyticus reveals the pathogenesis of uncomplicated urinary tract infection.</title>
        <authorList>
            <person name="Kuroda M."/>
            <person name="Yamashita A."/>
            <person name="Hirakawa H."/>
            <person name="Kumano M."/>
            <person name="Morikawa K."/>
            <person name="Higashide M."/>
            <person name="Maruyama A."/>
            <person name="Inose Y."/>
            <person name="Matoba K."/>
            <person name="Toh H."/>
            <person name="Kuhara S."/>
            <person name="Hattori M."/>
            <person name="Ohta T."/>
        </authorList>
    </citation>
    <scope>NUCLEOTIDE SEQUENCE [LARGE SCALE GENOMIC DNA]</scope>
    <source>
        <strain>ATCC 15305 / DSM 20229 / NCIMB 8711 / NCTC 7292 / S-41</strain>
    </source>
</reference>
<feature type="chain" id="PRO_0000269140" description="Small ribosomal subunit protein uS14B">
    <location>
        <begin position="1"/>
        <end position="61"/>
    </location>
</feature>
<feature type="binding site" evidence="1">
    <location>
        <position position="24"/>
    </location>
    <ligand>
        <name>Zn(2+)</name>
        <dbReference type="ChEBI" id="CHEBI:29105"/>
    </ligand>
</feature>
<feature type="binding site" evidence="1">
    <location>
        <position position="27"/>
    </location>
    <ligand>
        <name>Zn(2+)</name>
        <dbReference type="ChEBI" id="CHEBI:29105"/>
    </ligand>
</feature>
<feature type="binding site" evidence="1">
    <location>
        <position position="40"/>
    </location>
    <ligand>
        <name>Zn(2+)</name>
        <dbReference type="ChEBI" id="CHEBI:29105"/>
    </ligand>
</feature>
<feature type="binding site" evidence="1">
    <location>
        <position position="43"/>
    </location>
    <ligand>
        <name>Zn(2+)</name>
        <dbReference type="ChEBI" id="CHEBI:29105"/>
    </ligand>
</feature>
<proteinExistence type="inferred from homology"/>
<keyword id="KW-0479">Metal-binding</keyword>
<keyword id="KW-1185">Reference proteome</keyword>
<keyword id="KW-0687">Ribonucleoprotein</keyword>
<keyword id="KW-0689">Ribosomal protein</keyword>
<keyword id="KW-0694">RNA-binding</keyword>
<keyword id="KW-0699">rRNA-binding</keyword>
<keyword id="KW-0862">Zinc</keyword>
<name>RS14Z_STAS1</name>
<comment type="function">
    <text evidence="1">Binds 16S rRNA, required for the assembly of 30S particles and may also be responsible for determining the conformation of the 16S rRNA at the A site.</text>
</comment>
<comment type="cofactor">
    <cofactor evidence="1">
        <name>Zn(2+)</name>
        <dbReference type="ChEBI" id="CHEBI:29105"/>
    </cofactor>
    <text evidence="1">Binds 1 zinc ion per subunit.</text>
</comment>
<comment type="subunit">
    <text evidence="1">Part of the 30S ribosomal subunit. Contacts proteins S3 and S10.</text>
</comment>
<comment type="similarity">
    <text evidence="1">Belongs to the universal ribosomal protein uS14 family. Zinc-binding uS14 subfamily.</text>
</comment>
<organism>
    <name type="scientific">Staphylococcus saprophyticus subsp. saprophyticus (strain ATCC 15305 / DSM 20229 / NCIMB 8711 / NCTC 7292 / S-41)</name>
    <dbReference type="NCBI Taxonomy" id="342451"/>
    <lineage>
        <taxon>Bacteria</taxon>
        <taxon>Bacillati</taxon>
        <taxon>Bacillota</taxon>
        <taxon>Bacilli</taxon>
        <taxon>Bacillales</taxon>
        <taxon>Staphylococcaceae</taxon>
        <taxon>Staphylococcus</taxon>
    </lineage>
</organism>
<sequence length="61" mass="7341">MAKTSMVAKQQKKQKFQVREYTRCERCGRPHSVYRKFKLCRICFRELAYKGQIPGVRKASW</sequence>
<gene>
    <name evidence="1" type="primary">rpsZ</name>
    <name evidence="1" type="synonym">rpsN1</name>
    <name type="ordered locus">SSP0676</name>
</gene>